<keyword id="KW-0975">Bacterial flagellum</keyword>
<keyword id="KW-1003">Cell membrane</keyword>
<keyword id="KW-0449">Lipoprotein</keyword>
<keyword id="KW-0472">Membrane</keyword>
<keyword id="KW-0564">Palmitate</keyword>
<keyword id="KW-1185">Reference proteome</keyword>
<keyword id="KW-0732">Signal</keyword>
<evidence type="ECO:0000255" key="1">
    <source>
        <dbReference type="HAMAP-Rule" id="MF_00415"/>
    </source>
</evidence>
<protein>
    <recommendedName>
        <fullName evidence="1">Flagellar L-ring protein</fullName>
    </recommendedName>
    <alternativeName>
        <fullName evidence="1">Basal body L-ring protein</fullName>
    </alternativeName>
</protein>
<name>FLGH_WIGBR</name>
<accession>Q8D3F7</accession>
<dbReference type="EMBL" id="BA000021">
    <property type="protein sequence ID" value="BAC24190.1"/>
    <property type="molecule type" value="Genomic_DNA"/>
</dbReference>
<dbReference type="SMR" id="Q8D3F7"/>
<dbReference type="STRING" id="36870.gene:10368522"/>
<dbReference type="KEGG" id="wbr:flgH"/>
<dbReference type="eggNOG" id="COG2063">
    <property type="taxonomic scope" value="Bacteria"/>
</dbReference>
<dbReference type="HOGENOM" id="CLU_069313_0_0_6"/>
<dbReference type="OrthoDB" id="9789463at2"/>
<dbReference type="Proteomes" id="UP000000562">
    <property type="component" value="Chromosome"/>
</dbReference>
<dbReference type="GO" id="GO:0009427">
    <property type="term" value="C:bacterial-type flagellum basal body, distal rod, L ring"/>
    <property type="evidence" value="ECO:0007669"/>
    <property type="project" value="InterPro"/>
</dbReference>
<dbReference type="GO" id="GO:0009279">
    <property type="term" value="C:cell outer membrane"/>
    <property type="evidence" value="ECO:0007669"/>
    <property type="project" value="UniProtKB-UniRule"/>
</dbReference>
<dbReference type="GO" id="GO:0005886">
    <property type="term" value="C:plasma membrane"/>
    <property type="evidence" value="ECO:0007669"/>
    <property type="project" value="UniProtKB-SubCell"/>
</dbReference>
<dbReference type="GO" id="GO:0003774">
    <property type="term" value="F:cytoskeletal motor activity"/>
    <property type="evidence" value="ECO:0007669"/>
    <property type="project" value="InterPro"/>
</dbReference>
<dbReference type="GO" id="GO:0071973">
    <property type="term" value="P:bacterial-type flagellum-dependent cell motility"/>
    <property type="evidence" value="ECO:0007669"/>
    <property type="project" value="InterPro"/>
</dbReference>
<dbReference type="HAMAP" id="MF_00415">
    <property type="entry name" value="FlgH"/>
    <property type="match status" value="1"/>
</dbReference>
<dbReference type="InterPro" id="IPR000527">
    <property type="entry name" value="Flag_Lring"/>
</dbReference>
<dbReference type="PANTHER" id="PTHR34933">
    <property type="entry name" value="FLAGELLAR L-RING PROTEIN"/>
    <property type="match status" value="1"/>
</dbReference>
<dbReference type="PANTHER" id="PTHR34933:SF3">
    <property type="entry name" value="FLAGELLAR L-RING PROTEIN"/>
    <property type="match status" value="1"/>
</dbReference>
<dbReference type="Pfam" id="PF02107">
    <property type="entry name" value="FlgH"/>
    <property type="match status" value="1"/>
</dbReference>
<dbReference type="PRINTS" id="PR01008">
    <property type="entry name" value="FLGLRINGFLGH"/>
</dbReference>
<dbReference type="PROSITE" id="PS51257">
    <property type="entry name" value="PROKAR_LIPOPROTEIN"/>
    <property type="match status" value="1"/>
</dbReference>
<proteinExistence type="inferred from homology"/>
<feature type="signal peptide" evidence="1">
    <location>
        <begin position="1"/>
        <end position="17"/>
    </location>
</feature>
<feature type="chain" id="PRO_0000009482" description="Flagellar L-ring protein">
    <location>
        <begin position="18"/>
        <end position="228"/>
    </location>
</feature>
<feature type="lipid moiety-binding region" description="N-palmitoyl cysteine" evidence="1">
    <location>
        <position position="18"/>
    </location>
</feature>
<feature type="lipid moiety-binding region" description="S-diacylglycerol cysteine" evidence="1">
    <location>
        <position position="18"/>
    </location>
</feature>
<sequence length="228" mass="25316">MHYLRYFAIAFLLLLSSCSVTRHKPLIEGSTTTIPNTPSSNFINGSIFQQDNSLYYGYQPLFEDRRPKNIGDILTVLLQENVSASKSSSSNASRKSNANLEMNALPKIINKIIGNDQLSTDINSNNGFNGKGGSSAANTFSGTITVTVIDILTNGNLKVIGEKKISINQGTESIRFYGIVNPKTIDHNNQVMSNLISDSKIEYIGDGYINEVQKMNWLQRLFLNYFPF</sequence>
<reference key="1">
    <citation type="journal article" date="2002" name="Nat. Genet.">
        <title>Genome sequence of the endocellular obligate symbiont of tsetse flies, Wigglesworthia glossinidia.</title>
        <authorList>
            <person name="Akman L."/>
            <person name="Yamashita A."/>
            <person name="Watanabe H."/>
            <person name="Oshima K."/>
            <person name="Shiba T."/>
            <person name="Hattori M."/>
            <person name="Aksoy S."/>
        </authorList>
    </citation>
    <scope>NUCLEOTIDE SEQUENCE [LARGE SCALE GENOMIC DNA]</scope>
</reference>
<comment type="function">
    <text evidence="1">Assembles around the rod to form the L-ring and probably protects the motor/basal body from shearing forces during rotation.</text>
</comment>
<comment type="subunit">
    <text evidence="1">The basal body constitutes a major portion of the flagellar organelle and consists of four rings (L,P,S, and M) mounted on a central rod.</text>
</comment>
<comment type="subcellular location">
    <subcellularLocation>
        <location evidence="1">Cell membrane</location>
        <topology evidence="1">Lipid-anchor</topology>
    </subcellularLocation>
    <subcellularLocation>
        <location evidence="1">Bacterial flagellum basal body</location>
    </subcellularLocation>
</comment>
<comment type="similarity">
    <text evidence="1">Belongs to the FlgH family.</text>
</comment>
<gene>
    <name evidence="1" type="primary">flgH</name>
    <name type="ordered locus">WIGBR0440</name>
</gene>
<organism>
    <name type="scientific">Wigglesworthia glossinidia brevipalpis</name>
    <dbReference type="NCBI Taxonomy" id="36870"/>
    <lineage>
        <taxon>Bacteria</taxon>
        <taxon>Pseudomonadati</taxon>
        <taxon>Pseudomonadota</taxon>
        <taxon>Gammaproteobacteria</taxon>
        <taxon>Enterobacterales</taxon>
        <taxon>Erwiniaceae</taxon>
        <taxon>Wigglesworthia</taxon>
    </lineage>
</organism>